<sequence>MKYSSIFSMLSFFILFACNETAVYGSDENIIFMRYVEKLHLDKYSVKNTVKTETMAIQLAEIYVRYRYGERIAEEEKPYLITELPDSWVVEGAKLPYEVAGGVFIIEINKKNGCVLNFLHSK</sequence>
<organism>
    <name type="scientific">Escherichia coli (strain K12)</name>
    <dbReference type="NCBI Taxonomy" id="83333"/>
    <lineage>
        <taxon>Bacteria</taxon>
        <taxon>Pseudomonadati</taxon>
        <taxon>Pseudomonadota</taxon>
        <taxon>Gammaproteobacteria</taxon>
        <taxon>Enterobacterales</taxon>
        <taxon>Enterobacteriaceae</taxon>
        <taxon>Escherichia</taxon>
    </lineage>
</organism>
<evidence type="ECO:0000255" key="1">
    <source>
        <dbReference type="PROSITE-ProRule" id="PRU00303"/>
    </source>
</evidence>
<evidence type="ECO:0000269" key="2">
    <source>
    </source>
</evidence>
<proteinExistence type="evidence at transcript level"/>
<gene>
    <name type="primary">ybbC</name>
    <name type="ordered locus">b0498</name>
    <name type="ordered locus">JW0487</name>
</gene>
<accession>P33668</accession>
<accession>Q2MBS9</accession>
<name>YBBC_ECOLI</name>
<reference key="1">
    <citation type="journal article" date="1991" name="Nucleic Acids Res.">
        <title>The RhsD-E subfamily of Escherichia coli K-12.</title>
        <authorList>
            <person name="Sadosky A.B."/>
            <person name="Gray J.A."/>
            <person name="Hill C.W."/>
        </authorList>
    </citation>
    <scope>NUCLEOTIDE SEQUENCE [GENOMIC DNA]</scope>
    <source>
        <strain>K12</strain>
    </source>
</reference>
<reference key="2">
    <citation type="submission" date="1997-01" db="EMBL/GenBank/DDBJ databases">
        <title>Sequence of minutes 4-25 of Escherichia coli.</title>
        <authorList>
            <person name="Chung E."/>
            <person name="Allen E."/>
            <person name="Araujo R."/>
            <person name="Aparicio A.M."/>
            <person name="Davis K."/>
            <person name="Duncan M."/>
            <person name="Federspiel N."/>
            <person name="Hyman R."/>
            <person name="Kalman S."/>
            <person name="Komp C."/>
            <person name="Kurdi O."/>
            <person name="Lew H."/>
            <person name="Lin D."/>
            <person name="Namath A."/>
            <person name="Oefner P."/>
            <person name="Roberts D."/>
            <person name="Schramm S."/>
            <person name="Davis R.W."/>
        </authorList>
    </citation>
    <scope>NUCLEOTIDE SEQUENCE [LARGE SCALE GENOMIC DNA]</scope>
    <source>
        <strain>K12 / MG1655 / ATCC 47076</strain>
    </source>
</reference>
<reference key="3">
    <citation type="journal article" date="1997" name="Science">
        <title>The complete genome sequence of Escherichia coli K-12.</title>
        <authorList>
            <person name="Blattner F.R."/>
            <person name="Plunkett G. III"/>
            <person name="Bloch C.A."/>
            <person name="Perna N.T."/>
            <person name="Burland V."/>
            <person name="Riley M."/>
            <person name="Collado-Vides J."/>
            <person name="Glasner J.D."/>
            <person name="Rode C.K."/>
            <person name="Mayhew G.F."/>
            <person name="Gregor J."/>
            <person name="Davis N.W."/>
            <person name="Kirkpatrick H.A."/>
            <person name="Goeden M.A."/>
            <person name="Rose D.J."/>
            <person name="Mau B."/>
            <person name="Shao Y."/>
        </authorList>
    </citation>
    <scope>NUCLEOTIDE SEQUENCE [LARGE SCALE GENOMIC DNA]</scope>
    <source>
        <strain>K12 / MG1655 / ATCC 47076</strain>
    </source>
</reference>
<reference key="4">
    <citation type="journal article" date="2006" name="Mol. Syst. Biol.">
        <title>Highly accurate genome sequences of Escherichia coli K-12 strains MG1655 and W3110.</title>
        <authorList>
            <person name="Hayashi K."/>
            <person name="Morooka N."/>
            <person name="Yamamoto Y."/>
            <person name="Fujita K."/>
            <person name="Isono K."/>
            <person name="Choi S."/>
            <person name="Ohtsubo E."/>
            <person name="Baba T."/>
            <person name="Wanner B.L."/>
            <person name="Mori H."/>
            <person name="Horiuchi T."/>
        </authorList>
    </citation>
    <scope>NUCLEOTIDE SEQUENCE [LARGE SCALE GENOMIC DNA]</scope>
    <source>
        <strain>K12 / W3110 / ATCC 27325 / DSM 5911</strain>
    </source>
</reference>
<reference key="5">
    <citation type="journal article" date="2009" name="J. Bacteriol.">
        <title>Involvement of the leucine response transcription factor LeuO in regulation of the genes for sulfa drug efflux.</title>
        <authorList>
            <person name="Shimada T."/>
            <person name="Yamamoto K."/>
            <person name="Ishihama A."/>
        </authorList>
    </citation>
    <scope>OPERON STRUCTURE</scope>
    <scope>INDUCTION</scope>
    <source>
        <strain>K12 / BW25113</strain>
    </source>
</reference>
<protein>
    <recommendedName>
        <fullName>Uncharacterized protein YbbC</fullName>
    </recommendedName>
</protein>
<keyword id="KW-1185">Reference proteome</keyword>
<keyword id="KW-0732">Signal</keyword>
<comment type="induction">
    <text evidence="2">Repressed by H-NS, induced by LeuO. Part of the rhsD-ybbC operon.</text>
</comment>
<dbReference type="EMBL" id="X60999">
    <property type="protein sequence ID" value="CAA43315.1"/>
    <property type="molecule type" value="Genomic_DNA"/>
</dbReference>
<dbReference type="EMBL" id="U82664">
    <property type="protein sequence ID" value="AAB40252.1"/>
    <property type="molecule type" value="Genomic_DNA"/>
</dbReference>
<dbReference type="EMBL" id="U00096">
    <property type="protein sequence ID" value="AAC73600.1"/>
    <property type="molecule type" value="Genomic_DNA"/>
</dbReference>
<dbReference type="EMBL" id="AP009048">
    <property type="protein sequence ID" value="BAE76277.1"/>
    <property type="molecule type" value="Genomic_DNA"/>
</dbReference>
<dbReference type="PIR" id="A64781">
    <property type="entry name" value="A64781"/>
</dbReference>
<dbReference type="RefSeq" id="NP_415031.1">
    <property type="nucleotide sequence ID" value="NC_000913.3"/>
</dbReference>
<dbReference type="RefSeq" id="WP_000877768.1">
    <property type="nucleotide sequence ID" value="NZ_SSZK01000024.1"/>
</dbReference>
<dbReference type="BioGRID" id="4259866">
    <property type="interactions" value="254"/>
</dbReference>
<dbReference type="DIP" id="DIP-11316N"/>
<dbReference type="FunCoup" id="P33668">
    <property type="interactions" value="58"/>
</dbReference>
<dbReference type="IntAct" id="P33668">
    <property type="interactions" value="3"/>
</dbReference>
<dbReference type="STRING" id="511145.b0498"/>
<dbReference type="PaxDb" id="511145-b0498"/>
<dbReference type="EnsemblBacteria" id="AAC73600">
    <property type="protein sequence ID" value="AAC73600"/>
    <property type="gene ID" value="b0498"/>
</dbReference>
<dbReference type="GeneID" id="945115"/>
<dbReference type="KEGG" id="ecj:JW0487"/>
<dbReference type="KEGG" id="eco:b0498"/>
<dbReference type="KEGG" id="ecoc:C3026_02450"/>
<dbReference type="PATRIC" id="fig|511145.12.peg.519"/>
<dbReference type="EchoBASE" id="EB1719"/>
<dbReference type="eggNOG" id="ENOG5033NHI">
    <property type="taxonomic scope" value="Bacteria"/>
</dbReference>
<dbReference type="HOGENOM" id="CLU_161259_0_0_6"/>
<dbReference type="InParanoid" id="P33668"/>
<dbReference type="OrthoDB" id="6574147at2"/>
<dbReference type="BioCyc" id="EcoCyc:EG11769-MONOMER"/>
<dbReference type="PRO" id="PR:P33668"/>
<dbReference type="Proteomes" id="UP000000625">
    <property type="component" value="Chromosome"/>
</dbReference>
<dbReference type="InterPro" id="IPR028921">
    <property type="entry name" value="NTF2_fold_dom"/>
</dbReference>
<dbReference type="Pfam" id="PF15631">
    <property type="entry name" value="Imm-NTF2-2"/>
    <property type="match status" value="1"/>
</dbReference>
<dbReference type="PROSITE" id="PS51257">
    <property type="entry name" value="PROKAR_LIPOPROTEIN"/>
    <property type="match status" value="1"/>
</dbReference>
<feature type="signal peptide" evidence="1">
    <location>
        <begin position="1"/>
        <end position="17"/>
    </location>
</feature>
<feature type="chain" id="PRO_0000013796" description="Uncharacterized protein YbbC">
    <location>
        <begin position="18"/>
        <end position="122"/>
    </location>
</feature>